<organism>
    <name type="scientific">Haemophilus ducreyi (strain 35000HP / ATCC 700724)</name>
    <dbReference type="NCBI Taxonomy" id="233412"/>
    <lineage>
        <taxon>Bacteria</taxon>
        <taxon>Pseudomonadati</taxon>
        <taxon>Pseudomonadota</taxon>
        <taxon>Gammaproteobacteria</taxon>
        <taxon>Pasteurellales</taxon>
        <taxon>Pasteurellaceae</taxon>
        <taxon>Haemophilus</taxon>
    </lineage>
</organism>
<sequence>MATLEQKLTVLISDTIESMGYELVGVECQHAGRFLTVRLYIDKEGGVTIDDCSDVSRQVSAIFDVEDPISDKYNLEVSSPGLDRPLFTLAHYARFVGREMVIHLRIPMFDRRKWQGKLTKVDGDLISLEIENNGEHQFIFSNIQKANLIPVFDF</sequence>
<proteinExistence type="inferred from homology"/>
<reference key="1">
    <citation type="submission" date="2003-06" db="EMBL/GenBank/DDBJ databases">
        <title>The complete genome sequence of Haemophilus ducreyi.</title>
        <authorList>
            <person name="Munson R.S. Jr."/>
            <person name="Ray W.C."/>
            <person name="Mahairas G."/>
            <person name="Sabo P."/>
            <person name="Mungur R."/>
            <person name="Johnson L."/>
            <person name="Nguyen D."/>
            <person name="Wang J."/>
            <person name="Forst C."/>
            <person name="Hood L."/>
        </authorList>
    </citation>
    <scope>NUCLEOTIDE SEQUENCE [LARGE SCALE GENOMIC DNA]</scope>
    <source>
        <strain>35000HP / ATCC 700724</strain>
    </source>
</reference>
<evidence type="ECO:0000255" key="1">
    <source>
        <dbReference type="HAMAP-Rule" id="MF_01077"/>
    </source>
</evidence>
<dbReference type="EMBL" id="AE017143">
    <property type="protein sequence ID" value="AAP96267.1"/>
    <property type="molecule type" value="Genomic_DNA"/>
</dbReference>
<dbReference type="RefSeq" id="WP_010945312.1">
    <property type="nucleotide sequence ID" value="NC_002940.2"/>
</dbReference>
<dbReference type="SMR" id="Q7VLI0"/>
<dbReference type="STRING" id="233412.HD_1463"/>
<dbReference type="DNASU" id="1491347"/>
<dbReference type="KEGG" id="hdu:HD_1463"/>
<dbReference type="eggNOG" id="COG0779">
    <property type="taxonomic scope" value="Bacteria"/>
</dbReference>
<dbReference type="HOGENOM" id="CLU_070525_1_1_6"/>
<dbReference type="OrthoDB" id="9805006at2"/>
<dbReference type="Proteomes" id="UP000001022">
    <property type="component" value="Chromosome"/>
</dbReference>
<dbReference type="GO" id="GO:0005829">
    <property type="term" value="C:cytosol"/>
    <property type="evidence" value="ECO:0007669"/>
    <property type="project" value="TreeGrafter"/>
</dbReference>
<dbReference type="GO" id="GO:0000028">
    <property type="term" value="P:ribosomal small subunit assembly"/>
    <property type="evidence" value="ECO:0007669"/>
    <property type="project" value="TreeGrafter"/>
</dbReference>
<dbReference type="GO" id="GO:0006412">
    <property type="term" value="P:translation"/>
    <property type="evidence" value="ECO:0007669"/>
    <property type="project" value="TreeGrafter"/>
</dbReference>
<dbReference type="CDD" id="cd01734">
    <property type="entry name" value="YlxS_C"/>
    <property type="match status" value="1"/>
</dbReference>
<dbReference type="FunFam" id="3.30.300.70:FF:000001">
    <property type="entry name" value="Ribosome maturation factor RimP"/>
    <property type="match status" value="1"/>
</dbReference>
<dbReference type="Gene3D" id="2.30.30.180">
    <property type="entry name" value="Ribosome maturation factor RimP, C-terminal domain"/>
    <property type="match status" value="1"/>
</dbReference>
<dbReference type="Gene3D" id="3.30.300.70">
    <property type="entry name" value="RimP-like superfamily, N-terminal"/>
    <property type="match status" value="1"/>
</dbReference>
<dbReference type="HAMAP" id="MF_01077">
    <property type="entry name" value="RimP"/>
    <property type="match status" value="1"/>
</dbReference>
<dbReference type="InterPro" id="IPR003728">
    <property type="entry name" value="Ribosome_maturation_RimP"/>
</dbReference>
<dbReference type="InterPro" id="IPR028998">
    <property type="entry name" value="RimP_C"/>
</dbReference>
<dbReference type="InterPro" id="IPR036847">
    <property type="entry name" value="RimP_C_sf"/>
</dbReference>
<dbReference type="InterPro" id="IPR028989">
    <property type="entry name" value="RimP_N"/>
</dbReference>
<dbReference type="InterPro" id="IPR035956">
    <property type="entry name" value="RimP_N_sf"/>
</dbReference>
<dbReference type="NCBIfam" id="NF000927">
    <property type="entry name" value="PRK00092.1-1"/>
    <property type="match status" value="1"/>
</dbReference>
<dbReference type="PANTHER" id="PTHR33867">
    <property type="entry name" value="RIBOSOME MATURATION FACTOR RIMP"/>
    <property type="match status" value="1"/>
</dbReference>
<dbReference type="PANTHER" id="PTHR33867:SF1">
    <property type="entry name" value="RIBOSOME MATURATION FACTOR RIMP"/>
    <property type="match status" value="1"/>
</dbReference>
<dbReference type="Pfam" id="PF17384">
    <property type="entry name" value="DUF150_C"/>
    <property type="match status" value="1"/>
</dbReference>
<dbReference type="Pfam" id="PF02576">
    <property type="entry name" value="RimP_N"/>
    <property type="match status" value="1"/>
</dbReference>
<dbReference type="SUPFAM" id="SSF74942">
    <property type="entry name" value="YhbC-like, C-terminal domain"/>
    <property type="match status" value="1"/>
</dbReference>
<dbReference type="SUPFAM" id="SSF75420">
    <property type="entry name" value="YhbC-like, N-terminal domain"/>
    <property type="match status" value="1"/>
</dbReference>
<feature type="chain" id="PRO_0000181875" description="Ribosome maturation factor RimP">
    <location>
        <begin position="1"/>
        <end position="154"/>
    </location>
</feature>
<accession>Q7VLI0</accession>
<protein>
    <recommendedName>
        <fullName evidence="1">Ribosome maturation factor RimP</fullName>
    </recommendedName>
</protein>
<comment type="function">
    <text evidence="1">Required for maturation of 30S ribosomal subunits.</text>
</comment>
<comment type="subcellular location">
    <subcellularLocation>
        <location evidence="1">Cytoplasm</location>
    </subcellularLocation>
</comment>
<comment type="similarity">
    <text evidence="1">Belongs to the RimP family.</text>
</comment>
<gene>
    <name evidence="1" type="primary">rimP</name>
    <name type="ordered locus">HD_1463</name>
</gene>
<keyword id="KW-0963">Cytoplasm</keyword>
<keyword id="KW-1185">Reference proteome</keyword>
<keyword id="KW-0690">Ribosome biogenesis</keyword>
<name>RIMP_HAEDU</name>